<proteinExistence type="inferred from homology"/>
<evidence type="ECO:0000255" key="1">
    <source>
        <dbReference type="HAMAP-Rule" id="MF_00321"/>
    </source>
</evidence>
<evidence type="ECO:0000305" key="2"/>
<feature type="chain" id="PRO_0000266913" description="Probable GTP-binding protein EngB">
    <location>
        <begin position="1"/>
        <end position="233"/>
    </location>
</feature>
<feature type="domain" description="EngB-type G" evidence="1">
    <location>
        <begin position="31"/>
        <end position="205"/>
    </location>
</feature>
<feature type="binding site" evidence="1">
    <location>
        <begin position="39"/>
        <end position="46"/>
    </location>
    <ligand>
        <name>GTP</name>
        <dbReference type="ChEBI" id="CHEBI:37565"/>
    </ligand>
</feature>
<feature type="binding site" evidence="1">
    <location>
        <position position="46"/>
    </location>
    <ligand>
        <name>Mg(2+)</name>
        <dbReference type="ChEBI" id="CHEBI:18420"/>
    </ligand>
</feature>
<feature type="binding site" evidence="1">
    <location>
        <begin position="66"/>
        <end position="70"/>
    </location>
    <ligand>
        <name>GTP</name>
        <dbReference type="ChEBI" id="CHEBI:37565"/>
    </ligand>
</feature>
<feature type="binding site" evidence="1">
    <location>
        <position position="68"/>
    </location>
    <ligand>
        <name>Mg(2+)</name>
        <dbReference type="ChEBI" id="CHEBI:18420"/>
    </ligand>
</feature>
<feature type="binding site" evidence="1">
    <location>
        <begin position="84"/>
        <end position="87"/>
    </location>
    <ligand>
        <name>GTP</name>
        <dbReference type="ChEBI" id="CHEBI:37565"/>
    </ligand>
</feature>
<feature type="binding site" evidence="1">
    <location>
        <begin position="151"/>
        <end position="154"/>
    </location>
    <ligand>
        <name>GTP</name>
        <dbReference type="ChEBI" id="CHEBI:37565"/>
    </ligand>
</feature>
<feature type="binding site" evidence="1">
    <location>
        <begin position="184"/>
        <end position="186"/>
    </location>
    <ligand>
        <name>GTP</name>
        <dbReference type="ChEBI" id="CHEBI:37565"/>
    </ligand>
</feature>
<organism>
    <name type="scientific">Photobacterium profundum (strain SS9)</name>
    <dbReference type="NCBI Taxonomy" id="298386"/>
    <lineage>
        <taxon>Bacteria</taxon>
        <taxon>Pseudomonadati</taxon>
        <taxon>Pseudomonadota</taxon>
        <taxon>Gammaproteobacteria</taxon>
        <taxon>Vibrionales</taxon>
        <taxon>Vibrionaceae</taxon>
        <taxon>Photobacterium</taxon>
    </lineage>
</organism>
<dbReference type="EMBL" id="CR378674">
    <property type="protein sequence ID" value="CAG21773.1"/>
    <property type="status" value="ALT_INIT"/>
    <property type="molecule type" value="Genomic_DNA"/>
</dbReference>
<dbReference type="SMR" id="Q6LLQ5"/>
<dbReference type="STRING" id="298386.PBPRA3502"/>
<dbReference type="KEGG" id="ppr:PBPRA3502"/>
<dbReference type="eggNOG" id="COG0218">
    <property type="taxonomic scope" value="Bacteria"/>
</dbReference>
<dbReference type="HOGENOM" id="CLU_033732_1_2_6"/>
<dbReference type="Proteomes" id="UP000000593">
    <property type="component" value="Chromosome 1"/>
</dbReference>
<dbReference type="GO" id="GO:0005829">
    <property type="term" value="C:cytosol"/>
    <property type="evidence" value="ECO:0007669"/>
    <property type="project" value="TreeGrafter"/>
</dbReference>
<dbReference type="GO" id="GO:0005525">
    <property type="term" value="F:GTP binding"/>
    <property type="evidence" value="ECO:0007669"/>
    <property type="project" value="UniProtKB-UniRule"/>
</dbReference>
<dbReference type="GO" id="GO:0046872">
    <property type="term" value="F:metal ion binding"/>
    <property type="evidence" value="ECO:0007669"/>
    <property type="project" value="UniProtKB-KW"/>
</dbReference>
<dbReference type="GO" id="GO:0000917">
    <property type="term" value="P:division septum assembly"/>
    <property type="evidence" value="ECO:0007669"/>
    <property type="project" value="UniProtKB-KW"/>
</dbReference>
<dbReference type="CDD" id="cd01876">
    <property type="entry name" value="YihA_EngB"/>
    <property type="match status" value="1"/>
</dbReference>
<dbReference type="FunFam" id="3.40.50.300:FF:000098">
    <property type="entry name" value="Probable GTP-binding protein EngB"/>
    <property type="match status" value="1"/>
</dbReference>
<dbReference type="Gene3D" id="3.40.50.300">
    <property type="entry name" value="P-loop containing nucleotide triphosphate hydrolases"/>
    <property type="match status" value="1"/>
</dbReference>
<dbReference type="HAMAP" id="MF_00321">
    <property type="entry name" value="GTPase_EngB"/>
    <property type="match status" value="1"/>
</dbReference>
<dbReference type="InterPro" id="IPR030393">
    <property type="entry name" value="G_ENGB_dom"/>
</dbReference>
<dbReference type="InterPro" id="IPR006073">
    <property type="entry name" value="GTP-bd"/>
</dbReference>
<dbReference type="InterPro" id="IPR019987">
    <property type="entry name" value="GTP-bd_ribosome_bio_YsxC"/>
</dbReference>
<dbReference type="InterPro" id="IPR027417">
    <property type="entry name" value="P-loop_NTPase"/>
</dbReference>
<dbReference type="NCBIfam" id="TIGR03598">
    <property type="entry name" value="GTPase_YsxC"/>
    <property type="match status" value="1"/>
</dbReference>
<dbReference type="PANTHER" id="PTHR11649:SF13">
    <property type="entry name" value="ENGB-TYPE G DOMAIN-CONTAINING PROTEIN"/>
    <property type="match status" value="1"/>
</dbReference>
<dbReference type="PANTHER" id="PTHR11649">
    <property type="entry name" value="MSS1/TRME-RELATED GTP-BINDING PROTEIN"/>
    <property type="match status" value="1"/>
</dbReference>
<dbReference type="Pfam" id="PF01926">
    <property type="entry name" value="MMR_HSR1"/>
    <property type="match status" value="1"/>
</dbReference>
<dbReference type="SUPFAM" id="SSF52540">
    <property type="entry name" value="P-loop containing nucleoside triphosphate hydrolases"/>
    <property type="match status" value="1"/>
</dbReference>
<dbReference type="PROSITE" id="PS51706">
    <property type="entry name" value="G_ENGB"/>
    <property type="match status" value="1"/>
</dbReference>
<comment type="function">
    <text evidence="1">Necessary for normal cell division and for the maintenance of normal septation.</text>
</comment>
<comment type="cofactor">
    <cofactor evidence="1">
        <name>Mg(2+)</name>
        <dbReference type="ChEBI" id="CHEBI:18420"/>
    </cofactor>
</comment>
<comment type="similarity">
    <text evidence="1">Belongs to the TRAFAC class TrmE-Era-EngA-EngB-Septin-like GTPase superfamily. EngB GTPase family.</text>
</comment>
<comment type="sequence caution" evidence="2">
    <conflict type="erroneous initiation">
        <sequence resource="EMBL-CDS" id="CAG21773"/>
    </conflict>
</comment>
<name>ENGB_PHOPR</name>
<protein>
    <recommendedName>
        <fullName evidence="1">Probable GTP-binding protein EngB</fullName>
    </recommendedName>
</protein>
<reference key="1">
    <citation type="journal article" date="2005" name="Science">
        <title>Life at depth: Photobacterium profundum genome sequence and expression analysis.</title>
        <authorList>
            <person name="Vezzi A."/>
            <person name="Campanaro S."/>
            <person name="D'Angelo M."/>
            <person name="Simonato F."/>
            <person name="Vitulo N."/>
            <person name="Lauro F.M."/>
            <person name="Cestaro A."/>
            <person name="Malacrida G."/>
            <person name="Simionati B."/>
            <person name="Cannata N."/>
            <person name="Romualdi C."/>
            <person name="Bartlett D.H."/>
            <person name="Valle G."/>
        </authorList>
    </citation>
    <scope>NUCLEOTIDE SEQUENCE [LARGE SCALE GENOMIC DNA]</scope>
    <source>
        <strain>ATCC BAA-1253 / SS9</strain>
    </source>
</reference>
<keyword id="KW-0131">Cell cycle</keyword>
<keyword id="KW-0132">Cell division</keyword>
<keyword id="KW-0342">GTP-binding</keyword>
<keyword id="KW-0460">Magnesium</keyword>
<keyword id="KW-0479">Metal-binding</keyword>
<keyword id="KW-0547">Nucleotide-binding</keyword>
<keyword id="KW-1185">Reference proteome</keyword>
<keyword id="KW-0717">Septation</keyword>
<sequence length="233" mass="26014">MTELTVNQPLNYRNTGFITSAPDIRHLPQDTGVEIAFAGRSNAGKSSALNRITDQKGLARTSKTPGRTQLINMFEVTQGCNLIDLPGYGFAQVPLELKIKWQKALGEYLQKRECLKGLVVLMDIRHPMKDLDQQMIFWAIESRLPVLVLLTKADKMKSGARKAQLLKVRESSKSFGGDVQIELFSSLKGIGLDQVRRKLDTWFGPELERQLMLAAAENGETYTGESLSDKSDD</sequence>
<gene>
    <name evidence="1" type="primary">engB</name>
    <name type="ordered locus">PBPRA3502</name>
</gene>
<accession>Q6LLQ5</accession>